<keyword id="KW-0013">ADP-ribosylation</keyword>
<keyword id="KW-0963">Cytoplasm</keyword>
<keyword id="KW-1017">Isopeptide bond</keyword>
<keyword id="KW-0488">Methylation</keyword>
<keyword id="KW-0539">Nucleus</keyword>
<keyword id="KW-0597">Phosphoprotein</keyword>
<keyword id="KW-1185">Reference proteome</keyword>
<keyword id="KW-0687">Ribonucleoprotein</keyword>
<keyword id="KW-0689">Ribosomal protein</keyword>
<keyword id="KW-0832">Ubl conjugation</keyword>
<reference key="1">
    <citation type="submission" date="2005-06" db="EMBL/GenBank/DDBJ databases">
        <title>DNA sequences of macaque genes expressed in brain or testis and its evolutionary implications.</title>
        <authorList>
            <consortium name="International consortium for macaque cDNA sequencing and analysis"/>
        </authorList>
    </citation>
    <scope>NUCLEOTIDE SEQUENCE [LARGE SCALE MRNA]</scope>
    <source>
        <tissue>Testis</tissue>
    </source>
</reference>
<proteinExistence type="evidence at transcript level"/>
<protein>
    <recommendedName>
        <fullName evidence="6">Ubiquitin-ribosomal protein eL40 fusion protein</fullName>
    </recommendedName>
    <alternativeName>
        <fullName>Ubiquitin A-52 residue ribosomal protein fusion product 1</fullName>
    </alternativeName>
    <component>
        <recommendedName>
            <fullName>Ubiquitin</fullName>
        </recommendedName>
    </component>
    <component>
        <recommendedName>
            <fullName evidence="6">Large ribosomal subunit protein eL40</fullName>
        </recommendedName>
        <alternativeName>
            <fullName>60S ribosomal protein L40</fullName>
        </alternativeName>
        <alternativeName>
            <fullName>CEP52</fullName>
        </alternativeName>
    </component>
</protein>
<name>RL40_MACFA</name>
<feature type="chain" id="PRO_0000265742" description="Ubiquitin">
    <location>
        <begin position="1"/>
        <end position="76"/>
    </location>
</feature>
<feature type="chain" id="PRO_0000265743" description="Large ribosomal subunit protein eL40">
    <location>
        <begin position="77"/>
        <end position="128"/>
    </location>
</feature>
<feature type="domain" description="Ubiquitin-like" evidence="5">
    <location>
        <begin position="1"/>
        <end position="76"/>
    </location>
</feature>
<feature type="site" description="Interacts with activating enzyme">
    <location>
        <position position="54"/>
    </location>
</feature>
<feature type="site" description="Essential for function">
    <location>
        <position position="68"/>
    </location>
</feature>
<feature type="site" description="Interacts with activating enzyme">
    <location>
        <position position="72"/>
    </location>
</feature>
<feature type="modified residue" description="Phosphoserine; by PINK1" evidence="4">
    <location>
        <position position="65"/>
    </location>
</feature>
<feature type="modified residue" description="ADP-ribosylglycine" evidence="4">
    <location>
        <position position="76"/>
    </location>
</feature>
<feature type="modified residue" description="N6,N6,N6-trimethyllysine" evidence="3">
    <location>
        <position position="98"/>
    </location>
</feature>
<feature type="cross-link" description="Glycyl lysine isopeptide (Lys-Gly) (interchain with G-Cter in ubiquitin)" evidence="4">
    <location>
        <position position="6"/>
    </location>
</feature>
<feature type="cross-link" description="Glycyl lysine isopeptide (Lys-Gly) (interchain with G-Cter in ubiquitin)" evidence="4">
    <location>
        <position position="11"/>
    </location>
</feature>
<feature type="cross-link" description="Glycyl lysine isopeptide (Lys-Gly) (interchain with G-Cter in ubiquitin)" evidence="4">
    <location>
        <position position="27"/>
    </location>
</feature>
<feature type="cross-link" description="Glycyl lysine isopeptide (Lys-Gly) (interchain with G-Cter in ubiquitin)" evidence="4">
    <location>
        <position position="29"/>
    </location>
</feature>
<feature type="cross-link" description="Glycyl lysine isopeptide (Lys-Gly) (interchain with G-Cter in ubiquitin)" evidence="4">
    <location>
        <position position="33"/>
    </location>
</feature>
<feature type="cross-link" description="Glycyl lysine isopeptide (Lys-Gly) (interchain with G-Cter in ubiquitin)" evidence="4">
    <location>
        <position position="48"/>
    </location>
</feature>
<feature type="cross-link" description="Glycyl lysine isopeptide (Lys-Gly) (interchain with G-Cter in ubiquitin)" evidence="4">
    <location>
        <position position="63"/>
    </location>
</feature>
<feature type="cross-link" description="Glycyl lysine isopeptide (Gly-Lys) (interchain with K-? in acceptor proteins)" evidence="5">
    <location>
        <position position="76"/>
    </location>
</feature>
<evidence type="ECO:0000250" key="1"/>
<evidence type="ECO:0000250" key="2">
    <source>
        <dbReference type="UniProtKB" id="P62984"/>
    </source>
</evidence>
<evidence type="ECO:0000250" key="3">
    <source>
        <dbReference type="UniProtKB" id="P62986"/>
    </source>
</evidence>
<evidence type="ECO:0000250" key="4">
    <source>
        <dbReference type="UniProtKB" id="P62987"/>
    </source>
</evidence>
<evidence type="ECO:0000255" key="5">
    <source>
        <dbReference type="PROSITE-ProRule" id="PRU00214"/>
    </source>
</evidence>
<evidence type="ECO:0000305" key="6"/>
<sequence length="128" mass="14728">MQIFVKTLTGKTITLEVEPSDTIENVKAKIQDKEGIPPDQQRLIFAGKQLEDGRTLSDYNIQKESTLHLVLRLRGGIIEPSLRQLAQKYNCDKMICRKCYARLHPRAVNCRKKKCGHTNNLRPKKKVK</sequence>
<comment type="function">
    <molecule>Ubiquitin</molecule>
    <text evidence="4">Exists either covalently attached to another protein, or free (unanchored). When covalently bound, it is conjugated to target proteins via an isopeptide bond either as a monomer (monoubiquitin), a polymer linked via different Lys residues of the ubiquitin (polyubiquitin chains) or a linear polymer linked via the initiator Met of the ubiquitin (linear polyubiquitin chains). Polyubiquitin chains, when attached to a target protein, have different functions depending on the Lys residue of the ubiquitin that is linked: Lys-6-linked may be involved in DNA repair; Lys-11-linked is involved in ERAD (endoplasmic reticulum-associated degradation) and in cell-cycle regulation; Lys-29-linked is involved in proteotoxic stress response and cell cycle; Lys-33-linked is involved in kinase modification; Lys-48-linked is involved in protein degradation via the proteasome; Lys-63-linked is involved in endocytosis, DNA-damage responses as well as in signaling processes leading to activation of the transcription factor NF-kappa-B. Linear polymer chains formed via attachment by the initiator Met lead to cell signaling. Ubiquitin is usually conjugated to Lys residues of target proteins, however, in rare cases, conjugation to Cys or Ser residues has been observed. When polyubiquitin is free (unanchored-polyubiquitin), it also has distinct roles, such as in activation of protein kinases, and in signaling.</text>
</comment>
<comment type="function">
    <molecule>Large ribosomal subunit protein eL40</molecule>
    <text evidence="4">Component of the 60S subunit of the ribosome. Ribosomal protein L40 is essential for translation of a subset of cellular transcripts, and especially for cap-dependent translation of vesicular stomatitis virus mRNAs.</text>
</comment>
<comment type="subunit">
    <molecule>Large ribosomal subunit protein eL40</molecule>
    <text evidence="4">Part of the 60S ribosomal subunit. Interacts with UBQLN1 (via UBA domain).</text>
</comment>
<comment type="subcellular location">
    <molecule>Ubiquitin</molecule>
    <subcellularLocation>
        <location evidence="1">Cytoplasm</location>
    </subcellularLocation>
    <subcellularLocation>
        <location evidence="1">Nucleus</location>
    </subcellularLocation>
</comment>
<comment type="subcellular location">
    <molecule>Large ribosomal subunit protein eL40</molecule>
    <subcellularLocation>
        <location evidence="2">Cytoplasm</location>
    </subcellularLocation>
</comment>
<comment type="PTM">
    <molecule>Ubiquitin</molecule>
    <text evidence="4">Phosphorylated at Ser-65 by PINK1 during mitophagy. Phosphorylated ubiquitin specifically binds and activates parkin (PRKN), triggering mitophagy. Phosphorylation does not affect E1-mediated E2 charging of ubiquitin but affects discharging of E2 enzymes to form polyubiquitin chains. It also affects deubiquitination by deubiquitinase enzymes such as USP30.</text>
</comment>
<comment type="PTM">
    <molecule>Ubiquitin</molecule>
    <text evidence="4">Mono-ADP-ribosylated at the C-terminus by PARP9, a component of the PPAR9-DTX3L complex. ADP-ribosylation requires processing by E1 and E2 enzymes and prevents ubiquitin conjugation to substrates such as histones.</text>
</comment>
<comment type="PTM">
    <molecule>Large ribosomal subunit protein eL40</molecule>
    <text evidence="4">Trimethylation of Lys-98 ('Lys-22' of the mature chain) by SMYD5 promotes translation elongation and protein synthesis.</text>
</comment>
<comment type="miscellaneous">
    <text>Ubiquitin is encoded by 4 different genes. Uba52 and Rps27a genes code for a single copy of ubiquitin fused to the ribosomal proteins eL40 and eS31, respectively. UBB and UBC genes code for a polyubiquitin precursor with exact head to tail repeats, the number of repeats differ between species and strains.</text>
</comment>
<comment type="similarity">
    <text evidence="6">In the N-terminal section; belongs to the ubiquitin family.</text>
</comment>
<comment type="similarity">
    <text evidence="6">In the C-terminal section; belongs to the eukaryotic ribosomal protein eL40 family.</text>
</comment>
<accession>P0C273</accession>
<accession>P0C274</accession>
<accession>Q4R787</accession>
<dbReference type="EMBL" id="AB168934">
    <property type="protein sequence ID" value="BAE01035.1"/>
    <property type="molecule type" value="mRNA"/>
</dbReference>
<dbReference type="RefSeq" id="NP_001270086.1">
    <property type="nucleotide sequence ID" value="NM_001283157.1"/>
</dbReference>
<dbReference type="RefSeq" id="XP_005588529.1">
    <property type="nucleotide sequence ID" value="XM_005588472.4"/>
</dbReference>
<dbReference type="RefSeq" id="XP_005588530.1">
    <property type="nucleotide sequence ID" value="XM_005588473.2"/>
</dbReference>
<dbReference type="RefSeq" id="XP_045235178.1">
    <property type="nucleotide sequence ID" value="XM_045379243.2"/>
</dbReference>
<dbReference type="RefSeq" id="XP_065391323.1">
    <property type="nucleotide sequence ID" value="XM_065535251.1"/>
</dbReference>
<dbReference type="RefSeq" id="XP_065391324.1">
    <property type="nucleotide sequence ID" value="XM_065535252.1"/>
</dbReference>
<dbReference type="RefSeq" id="XP_065391325.1">
    <property type="nucleotide sequence ID" value="XM_065535253.1"/>
</dbReference>
<dbReference type="BMRB" id="P0C273"/>
<dbReference type="SMR" id="P0C273"/>
<dbReference type="STRING" id="9541.ENSMFAP00000027128"/>
<dbReference type="Ensembl" id="ENSMFAT00000001311.2">
    <property type="protein sequence ID" value="ENSMFAP00000027128.2"/>
    <property type="gene ID" value="ENSMFAG00000049103.1"/>
</dbReference>
<dbReference type="GeneID" id="101866252"/>
<dbReference type="CTD" id="7311"/>
<dbReference type="eggNOG" id="KOG0003">
    <property type="taxonomic scope" value="Eukaryota"/>
</dbReference>
<dbReference type="GeneTree" id="ENSGT00940000153593"/>
<dbReference type="Proteomes" id="UP000233100">
    <property type="component" value="Chromosome 19"/>
</dbReference>
<dbReference type="GO" id="GO:0022625">
    <property type="term" value="C:cytosolic large ribosomal subunit"/>
    <property type="evidence" value="ECO:0007669"/>
    <property type="project" value="Ensembl"/>
</dbReference>
<dbReference type="GO" id="GO:0005634">
    <property type="term" value="C:nucleus"/>
    <property type="evidence" value="ECO:0007669"/>
    <property type="project" value="UniProtKB-SubCell"/>
</dbReference>
<dbReference type="GO" id="GO:0045202">
    <property type="term" value="C:synapse"/>
    <property type="evidence" value="ECO:0007669"/>
    <property type="project" value="Ensembl"/>
</dbReference>
<dbReference type="GO" id="GO:0003735">
    <property type="term" value="F:structural constituent of ribosome"/>
    <property type="evidence" value="ECO:0007669"/>
    <property type="project" value="Ensembl"/>
</dbReference>
<dbReference type="GO" id="GO:0002181">
    <property type="term" value="P:cytoplasmic translation"/>
    <property type="evidence" value="ECO:0007669"/>
    <property type="project" value="Ensembl"/>
</dbReference>
<dbReference type="CDD" id="cd01803">
    <property type="entry name" value="Ubl_ubiquitin"/>
    <property type="match status" value="1"/>
</dbReference>
<dbReference type="FunFam" id="3.10.20.90:FF:000014">
    <property type="entry name" value="Ubiquitin-60S ribosomal L40 fusion"/>
    <property type="match status" value="1"/>
</dbReference>
<dbReference type="FunFam" id="4.10.1060.50:FF:000001">
    <property type="entry name" value="ubiquitin-60S ribosomal protein L40"/>
    <property type="match status" value="1"/>
</dbReference>
<dbReference type="Gene3D" id="4.10.1060.50">
    <property type="match status" value="1"/>
</dbReference>
<dbReference type="Gene3D" id="3.10.20.90">
    <property type="entry name" value="Phosphatidylinositol 3-kinase Catalytic Subunit, Chain A, domain 1"/>
    <property type="match status" value="1"/>
</dbReference>
<dbReference type="InterPro" id="IPR001975">
    <property type="entry name" value="Ribosomal_eL40_dom"/>
</dbReference>
<dbReference type="InterPro" id="IPR038587">
    <property type="entry name" value="Ribosomal_eL40_sf"/>
</dbReference>
<dbReference type="InterPro" id="IPR000626">
    <property type="entry name" value="Ubiquitin-like_dom"/>
</dbReference>
<dbReference type="InterPro" id="IPR029071">
    <property type="entry name" value="Ubiquitin-like_domsf"/>
</dbReference>
<dbReference type="InterPro" id="IPR019954">
    <property type="entry name" value="Ubiquitin_CS"/>
</dbReference>
<dbReference type="InterPro" id="IPR019956">
    <property type="entry name" value="Ubiquitin_dom"/>
</dbReference>
<dbReference type="InterPro" id="IPR050158">
    <property type="entry name" value="Ubiquitin_ubiquitin-like"/>
</dbReference>
<dbReference type="PANTHER" id="PTHR10666">
    <property type="entry name" value="UBIQUITIN"/>
    <property type="match status" value="1"/>
</dbReference>
<dbReference type="Pfam" id="PF01020">
    <property type="entry name" value="Ribosomal_L40e"/>
    <property type="match status" value="1"/>
</dbReference>
<dbReference type="Pfam" id="PF00240">
    <property type="entry name" value="ubiquitin"/>
    <property type="match status" value="1"/>
</dbReference>
<dbReference type="PRINTS" id="PR00348">
    <property type="entry name" value="UBIQUITIN"/>
</dbReference>
<dbReference type="SMART" id="SM01377">
    <property type="entry name" value="Ribosomal_L40e"/>
    <property type="match status" value="1"/>
</dbReference>
<dbReference type="SMART" id="SM00213">
    <property type="entry name" value="UBQ"/>
    <property type="match status" value="1"/>
</dbReference>
<dbReference type="SUPFAM" id="SSF54236">
    <property type="entry name" value="Ubiquitin-like"/>
    <property type="match status" value="1"/>
</dbReference>
<dbReference type="PROSITE" id="PS00299">
    <property type="entry name" value="UBIQUITIN_1"/>
    <property type="match status" value="1"/>
</dbReference>
<dbReference type="PROSITE" id="PS50053">
    <property type="entry name" value="UBIQUITIN_2"/>
    <property type="match status" value="1"/>
</dbReference>
<organism>
    <name type="scientific">Macaca fascicularis</name>
    <name type="common">Crab-eating macaque</name>
    <name type="synonym">Cynomolgus monkey</name>
    <dbReference type="NCBI Taxonomy" id="9541"/>
    <lineage>
        <taxon>Eukaryota</taxon>
        <taxon>Metazoa</taxon>
        <taxon>Chordata</taxon>
        <taxon>Craniata</taxon>
        <taxon>Vertebrata</taxon>
        <taxon>Euteleostomi</taxon>
        <taxon>Mammalia</taxon>
        <taxon>Eutheria</taxon>
        <taxon>Euarchontoglires</taxon>
        <taxon>Primates</taxon>
        <taxon>Haplorrhini</taxon>
        <taxon>Catarrhini</taxon>
        <taxon>Cercopithecidae</taxon>
        <taxon>Cercopithecinae</taxon>
        <taxon>Macaca</taxon>
    </lineage>
</organism>
<gene>
    <name type="primary">UBA52</name>
    <name type="synonym">UBCEP2</name>
    <name type="ORF">QtsA-15896</name>
</gene>